<feature type="chain" id="PRO_1000073282" description="Large ribosomal subunit protein uL22">
    <location>
        <begin position="1"/>
        <end position="117"/>
    </location>
</feature>
<organism>
    <name type="scientific">Staphylococcus aureus (strain Newman)</name>
    <dbReference type="NCBI Taxonomy" id="426430"/>
    <lineage>
        <taxon>Bacteria</taxon>
        <taxon>Bacillati</taxon>
        <taxon>Bacillota</taxon>
        <taxon>Bacilli</taxon>
        <taxon>Bacillales</taxon>
        <taxon>Staphylococcaceae</taxon>
        <taxon>Staphylococcus</taxon>
    </lineage>
</organism>
<reference key="1">
    <citation type="journal article" date="2008" name="J. Bacteriol.">
        <title>Genome sequence of Staphylococcus aureus strain Newman and comparative analysis of staphylococcal genomes: polymorphism and evolution of two major pathogenicity islands.</title>
        <authorList>
            <person name="Baba T."/>
            <person name="Bae T."/>
            <person name="Schneewind O."/>
            <person name="Takeuchi F."/>
            <person name="Hiramatsu K."/>
        </authorList>
    </citation>
    <scope>NUCLEOTIDE SEQUENCE [LARGE SCALE GENOMIC DNA]</scope>
    <source>
        <strain>Newman</strain>
    </source>
</reference>
<gene>
    <name evidence="1" type="primary">rplV</name>
    <name type="ordered locus">NWMN_2147</name>
</gene>
<sequence length="117" mass="12835">MEAKAVARTIRIAPRKVRLVLDLIRGKNAAEAIAILKLTNKASSPVIEKVLMSALANAEHNYDMNTDELVVKEAYANEGPTLKRFRPRAQGRASAINKRTSHITIVVSDGKEEAKEA</sequence>
<name>RL22_STAAE</name>
<dbReference type="EMBL" id="AP009351">
    <property type="protein sequence ID" value="BAF68419.1"/>
    <property type="molecule type" value="Genomic_DNA"/>
</dbReference>
<dbReference type="RefSeq" id="WP_000387527.1">
    <property type="nucleotide sequence ID" value="NZ_JBBIAE010000006.1"/>
</dbReference>
<dbReference type="SMR" id="A6QJ87"/>
<dbReference type="GeneID" id="98346557"/>
<dbReference type="KEGG" id="sae:NWMN_2147"/>
<dbReference type="HOGENOM" id="CLU_083987_3_3_9"/>
<dbReference type="Proteomes" id="UP000006386">
    <property type="component" value="Chromosome"/>
</dbReference>
<dbReference type="GO" id="GO:0022625">
    <property type="term" value="C:cytosolic large ribosomal subunit"/>
    <property type="evidence" value="ECO:0007669"/>
    <property type="project" value="TreeGrafter"/>
</dbReference>
<dbReference type="GO" id="GO:0019843">
    <property type="term" value="F:rRNA binding"/>
    <property type="evidence" value="ECO:0007669"/>
    <property type="project" value="UniProtKB-UniRule"/>
</dbReference>
<dbReference type="GO" id="GO:0003735">
    <property type="term" value="F:structural constituent of ribosome"/>
    <property type="evidence" value="ECO:0007669"/>
    <property type="project" value="InterPro"/>
</dbReference>
<dbReference type="GO" id="GO:0006412">
    <property type="term" value="P:translation"/>
    <property type="evidence" value="ECO:0007669"/>
    <property type="project" value="UniProtKB-UniRule"/>
</dbReference>
<dbReference type="CDD" id="cd00336">
    <property type="entry name" value="Ribosomal_L22"/>
    <property type="match status" value="1"/>
</dbReference>
<dbReference type="FunFam" id="3.90.470.10:FF:000001">
    <property type="entry name" value="50S ribosomal protein L22"/>
    <property type="match status" value="1"/>
</dbReference>
<dbReference type="Gene3D" id="3.90.470.10">
    <property type="entry name" value="Ribosomal protein L22/L17"/>
    <property type="match status" value="1"/>
</dbReference>
<dbReference type="HAMAP" id="MF_01331_B">
    <property type="entry name" value="Ribosomal_uL22_B"/>
    <property type="match status" value="1"/>
</dbReference>
<dbReference type="InterPro" id="IPR001063">
    <property type="entry name" value="Ribosomal_uL22"/>
</dbReference>
<dbReference type="InterPro" id="IPR005727">
    <property type="entry name" value="Ribosomal_uL22_bac/chlpt-type"/>
</dbReference>
<dbReference type="InterPro" id="IPR047867">
    <property type="entry name" value="Ribosomal_uL22_bac/org-type"/>
</dbReference>
<dbReference type="InterPro" id="IPR018260">
    <property type="entry name" value="Ribosomal_uL22_CS"/>
</dbReference>
<dbReference type="InterPro" id="IPR036394">
    <property type="entry name" value="Ribosomal_uL22_sf"/>
</dbReference>
<dbReference type="NCBIfam" id="TIGR01044">
    <property type="entry name" value="rplV_bact"/>
    <property type="match status" value="1"/>
</dbReference>
<dbReference type="PANTHER" id="PTHR13501">
    <property type="entry name" value="CHLOROPLAST 50S RIBOSOMAL PROTEIN L22-RELATED"/>
    <property type="match status" value="1"/>
</dbReference>
<dbReference type="PANTHER" id="PTHR13501:SF8">
    <property type="entry name" value="LARGE RIBOSOMAL SUBUNIT PROTEIN UL22M"/>
    <property type="match status" value="1"/>
</dbReference>
<dbReference type="Pfam" id="PF00237">
    <property type="entry name" value="Ribosomal_L22"/>
    <property type="match status" value="1"/>
</dbReference>
<dbReference type="SUPFAM" id="SSF54843">
    <property type="entry name" value="Ribosomal protein L22"/>
    <property type="match status" value="1"/>
</dbReference>
<dbReference type="PROSITE" id="PS00464">
    <property type="entry name" value="RIBOSOMAL_L22"/>
    <property type="match status" value="1"/>
</dbReference>
<accession>A6QJ87</accession>
<protein>
    <recommendedName>
        <fullName evidence="1">Large ribosomal subunit protein uL22</fullName>
    </recommendedName>
    <alternativeName>
        <fullName evidence="2">50S ribosomal protein L22</fullName>
    </alternativeName>
</protein>
<comment type="function">
    <text evidence="1">This protein binds specifically to 23S rRNA; its binding is stimulated by other ribosomal proteins, e.g. L4, L17, and L20. It is important during the early stages of 50S assembly. It makes multiple contacts with different domains of the 23S rRNA in the assembled 50S subunit and ribosome (By similarity).</text>
</comment>
<comment type="function">
    <text evidence="1">The globular domain of the protein is located near the polypeptide exit tunnel on the outside of the subunit, while an extended beta-hairpin is found that lines the wall of the exit tunnel in the center of the 70S ribosome.</text>
</comment>
<comment type="subunit">
    <text evidence="1">Part of the 50S ribosomal subunit.</text>
</comment>
<comment type="similarity">
    <text evidence="1">Belongs to the universal ribosomal protein uL22 family.</text>
</comment>
<proteinExistence type="inferred from homology"/>
<evidence type="ECO:0000255" key="1">
    <source>
        <dbReference type="HAMAP-Rule" id="MF_01331"/>
    </source>
</evidence>
<evidence type="ECO:0000305" key="2"/>
<keyword id="KW-0687">Ribonucleoprotein</keyword>
<keyword id="KW-0689">Ribosomal protein</keyword>
<keyword id="KW-0694">RNA-binding</keyword>
<keyword id="KW-0699">rRNA-binding</keyword>